<gene>
    <name evidence="1" type="primary">rps19</name>
</gene>
<reference key="1">
    <citation type="submission" date="2007-03" db="EMBL/GenBank/DDBJ databases">
        <title>Sequencing analysis of Draba nemoroza chloroplast DNA.</title>
        <authorList>
            <person name="Hosouchi T."/>
            <person name="Tsuruoka H."/>
            <person name="Kotani H."/>
        </authorList>
    </citation>
    <scope>NUCLEOTIDE SEQUENCE [LARGE SCALE GENOMIC DNA]</scope>
</reference>
<name>RR19_DRANE</name>
<feature type="chain" id="PRO_0000354352" description="Small ribosomal subunit protein uS19c">
    <location>
        <begin position="1"/>
        <end position="92"/>
    </location>
</feature>
<keyword id="KW-0150">Chloroplast</keyword>
<keyword id="KW-0934">Plastid</keyword>
<keyword id="KW-0687">Ribonucleoprotein</keyword>
<keyword id="KW-0689">Ribosomal protein</keyword>
<keyword id="KW-0694">RNA-binding</keyword>
<keyword id="KW-0699">rRNA-binding</keyword>
<geneLocation type="chloroplast"/>
<sequence length="92" mass="10595">MTRSLKKNPFVAKHLLRKIEKLNTKAEKEIIITWSRASTIIPTMIGHTIAIHNGREHLPVYIIDLMVGHKLGEFSPTINFRGHAKNDTRSRR</sequence>
<evidence type="ECO:0000255" key="1">
    <source>
        <dbReference type="HAMAP-Rule" id="MF_00531"/>
    </source>
</evidence>
<evidence type="ECO:0000305" key="2"/>
<accession>A4QL59</accession>
<organism>
    <name type="scientific">Draba nemorosa</name>
    <name type="common">Woodland whitlowgrass</name>
    <dbReference type="NCBI Taxonomy" id="171822"/>
    <lineage>
        <taxon>Eukaryota</taxon>
        <taxon>Viridiplantae</taxon>
        <taxon>Streptophyta</taxon>
        <taxon>Embryophyta</taxon>
        <taxon>Tracheophyta</taxon>
        <taxon>Spermatophyta</taxon>
        <taxon>Magnoliopsida</taxon>
        <taxon>eudicotyledons</taxon>
        <taxon>Gunneridae</taxon>
        <taxon>Pentapetalae</taxon>
        <taxon>rosids</taxon>
        <taxon>malvids</taxon>
        <taxon>Brassicales</taxon>
        <taxon>Brassicaceae</taxon>
        <taxon>Arabideae</taxon>
        <taxon>Draba</taxon>
    </lineage>
</organism>
<protein>
    <recommendedName>
        <fullName evidence="1">Small ribosomal subunit protein uS19c</fullName>
    </recommendedName>
    <alternativeName>
        <fullName evidence="2">30S ribosomal protein S19, chloroplastic</fullName>
    </alternativeName>
</protein>
<dbReference type="EMBL" id="AP009373">
    <property type="protein sequence ID" value="BAF50414.1"/>
    <property type="molecule type" value="Genomic_DNA"/>
</dbReference>
<dbReference type="RefSeq" id="YP_001123590.1">
    <property type="nucleotide sequence ID" value="NC_009272.1"/>
</dbReference>
<dbReference type="SMR" id="A4QL59"/>
<dbReference type="GeneID" id="4964782"/>
<dbReference type="GO" id="GO:0009507">
    <property type="term" value="C:chloroplast"/>
    <property type="evidence" value="ECO:0007669"/>
    <property type="project" value="UniProtKB-SubCell"/>
</dbReference>
<dbReference type="GO" id="GO:0005763">
    <property type="term" value="C:mitochondrial small ribosomal subunit"/>
    <property type="evidence" value="ECO:0007669"/>
    <property type="project" value="TreeGrafter"/>
</dbReference>
<dbReference type="GO" id="GO:0019843">
    <property type="term" value="F:rRNA binding"/>
    <property type="evidence" value="ECO:0007669"/>
    <property type="project" value="UniProtKB-UniRule"/>
</dbReference>
<dbReference type="GO" id="GO:0003735">
    <property type="term" value="F:structural constituent of ribosome"/>
    <property type="evidence" value="ECO:0007669"/>
    <property type="project" value="InterPro"/>
</dbReference>
<dbReference type="GO" id="GO:0000028">
    <property type="term" value="P:ribosomal small subunit assembly"/>
    <property type="evidence" value="ECO:0007669"/>
    <property type="project" value="TreeGrafter"/>
</dbReference>
<dbReference type="GO" id="GO:0006412">
    <property type="term" value="P:translation"/>
    <property type="evidence" value="ECO:0007669"/>
    <property type="project" value="UniProtKB-UniRule"/>
</dbReference>
<dbReference type="FunFam" id="3.30.860.10:FF:000001">
    <property type="entry name" value="30S ribosomal protein S19"/>
    <property type="match status" value="1"/>
</dbReference>
<dbReference type="Gene3D" id="3.30.860.10">
    <property type="entry name" value="30s Ribosomal Protein S19, Chain A"/>
    <property type="match status" value="1"/>
</dbReference>
<dbReference type="HAMAP" id="MF_00531">
    <property type="entry name" value="Ribosomal_uS19"/>
    <property type="match status" value="1"/>
</dbReference>
<dbReference type="InterPro" id="IPR002222">
    <property type="entry name" value="Ribosomal_uS19"/>
</dbReference>
<dbReference type="InterPro" id="IPR005732">
    <property type="entry name" value="Ribosomal_uS19_bac-type"/>
</dbReference>
<dbReference type="InterPro" id="IPR020934">
    <property type="entry name" value="Ribosomal_uS19_CS"/>
</dbReference>
<dbReference type="InterPro" id="IPR023575">
    <property type="entry name" value="Ribosomal_uS19_SF"/>
</dbReference>
<dbReference type="NCBIfam" id="TIGR01050">
    <property type="entry name" value="rpsS_bact"/>
    <property type="match status" value="1"/>
</dbReference>
<dbReference type="PANTHER" id="PTHR11880">
    <property type="entry name" value="RIBOSOMAL PROTEIN S19P FAMILY MEMBER"/>
    <property type="match status" value="1"/>
</dbReference>
<dbReference type="PANTHER" id="PTHR11880:SF8">
    <property type="entry name" value="SMALL RIBOSOMAL SUBUNIT PROTEIN US19M"/>
    <property type="match status" value="1"/>
</dbReference>
<dbReference type="Pfam" id="PF00203">
    <property type="entry name" value="Ribosomal_S19"/>
    <property type="match status" value="1"/>
</dbReference>
<dbReference type="PIRSF" id="PIRSF002144">
    <property type="entry name" value="Ribosomal_S19"/>
    <property type="match status" value="1"/>
</dbReference>
<dbReference type="PRINTS" id="PR00975">
    <property type="entry name" value="RIBOSOMALS19"/>
</dbReference>
<dbReference type="SUPFAM" id="SSF54570">
    <property type="entry name" value="Ribosomal protein S19"/>
    <property type="match status" value="1"/>
</dbReference>
<dbReference type="PROSITE" id="PS00323">
    <property type="entry name" value="RIBOSOMAL_S19"/>
    <property type="match status" value="1"/>
</dbReference>
<comment type="function">
    <text evidence="1">Protein S19 forms a complex with S13 that binds strongly to the 16S ribosomal RNA.</text>
</comment>
<comment type="subcellular location">
    <subcellularLocation>
        <location>Plastid</location>
        <location>Chloroplast</location>
    </subcellularLocation>
</comment>
<comment type="similarity">
    <text evidence="1">Belongs to the universal ribosomal protein uS19 family.</text>
</comment>
<proteinExistence type="inferred from homology"/>